<accession>Q03SD0</accession>
<proteinExistence type="inferred from homology"/>
<dbReference type="EC" id="3.1.-.-" evidence="1"/>
<dbReference type="EMBL" id="CP000416">
    <property type="protein sequence ID" value="ABJ63892.1"/>
    <property type="molecule type" value="Genomic_DNA"/>
</dbReference>
<dbReference type="RefSeq" id="WP_011667523.1">
    <property type="nucleotide sequence ID" value="NC_008497.1"/>
</dbReference>
<dbReference type="SMR" id="Q03SD0"/>
<dbReference type="STRING" id="387344.LVIS_0749"/>
<dbReference type="GeneID" id="56993060"/>
<dbReference type="KEGG" id="lbr:LVIS_0749"/>
<dbReference type="eggNOG" id="COG0319">
    <property type="taxonomic scope" value="Bacteria"/>
</dbReference>
<dbReference type="HOGENOM" id="CLU_106710_3_0_9"/>
<dbReference type="Proteomes" id="UP000001652">
    <property type="component" value="Chromosome"/>
</dbReference>
<dbReference type="GO" id="GO:0005737">
    <property type="term" value="C:cytoplasm"/>
    <property type="evidence" value="ECO:0007669"/>
    <property type="project" value="UniProtKB-SubCell"/>
</dbReference>
<dbReference type="GO" id="GO:0004222">
    <property type="term" value="F:metalloendopeptidase activity"/>
    <property type="evidence" value="ECO:0007669"/>
    <property type="project" value="InterPro"/>
</dbReference>
<dbReference type="GO" id="GO:0004521">
    <property type="term" value="F:RNA endonuclease activity"/>
    <property type="evidence" value="ECO:0007669"/>
    <property type="project" value="UniProtKB-UniRule"/>
</dbReference>
<dbReference type="GO" id="GO:0008270">
    <property type="term" value="F:zinc ion binding"/>
    <property type="evidence" value="ECO:0007669"/>
    <property type="project" value="UniProtKB-UniRule"/>
</dbReference>
<dbReference type="GO" id="GO:0006364">
    <property type="term" value="P:rRNA processing"/>
    <property type="evidence" value="ECO:0007669"/>
    <property type="project" value="UniProtKB-UniRule"/>
</dbReference>
<dbReference type="Gene3D" id="3.40.390.30">
    <property type="entry name" value="Metalloproteases ('zincins'), catalytic domain"/>
    <property type="match status" value="1"/>
</dbReference>
<dbReference type="HAMAP" id="MF_00009">
    <property type="entry name" value="Endoribonucl_YbeY"/>
    <property type="match status" value="1"/>
</dbReference>
<dbReference type="InterPro" id="IPR023091">
    <property type="entry name" value="MetalPrtase_cat_dom_sf_prd"/>
</dbReference>
<dbReference type="InterPro" id="IPR002036">
    <property type="entry name" value="YbeY"/>
</dbReference>
<dbReference type="InterPro" id="IPR020549">
    <property type="entry name" value="YbeY_CS"/>
</dbReference>
<dbReference type="NCBIfam" id="TIGR00043">
    <property type="entry name" value="rRNA maturation RNase YbeY"/>
    <property type="match status" value="1"/>
</dbReference>
<dbReference type="PANTHER" id="PTHR46986">
    <property type="entry name" value="ENDORIBONUCLEASE YBEY, CHLOROPLASTIC"/>
    <property type="match status" value="1"/>
</dbReference>
<dbReference type="PANTHER" id="PTHR46986:SF1">
    <property type="entry name" value="ENDORIBONUCLEASE YBEY, CHLOROPLASTIC"/>
    <property type="match status" value="1"/>
</dbReference>
<dbReference type="Pfam" id="PF02130">
    <property type="entry name" value="YbeY"/>
    <property type="match status" value="1"/>
</dbReference>
<dbReference type="SUPFAM" id="SSF55486">
    <property type="entry name" value="Metalloproteases ('zincins'), catalytic domain"/>
    <property type="match status" value="1"/>
</dbReference>
<dbReference type="PROSITE" id="PS01306">
    <property type="entry name" value="UPF0054"/>
    <property type="match status" value="1"/>
</dbReference>
<gene>
    <name evidence="1" type="primary">ybeY</name>
    <name type="ordered locus">LVIS_0749</name>
</gene>
<reference key="1">
    <citation type="journal article" date="2006" name="Proc. Natl. Acad. Sci. U.S.A.">
        <title>Comparative genomics of the lactic acid bacteria.</title>
        <authorList>
            <person name="Makarova K.S."/>
            <person name="Slesarev A."/>
            <person name="Wolf Y.I."/>
            <person name="Sorokin A."/>
            <person name="Mirkin B."/>
            <person name="Koonin E.V."/>
            <person name="Pavlov A."/>
            <person name="Pavlova N."/>
            <person name="Karamychev V."/>
            <person name="Polouchine N."/>
            <person name="Shakhova V."/>
            <person name="Grigoriev I."/>
            <person name="Lou Y."/>
            <person name="Rohksar D."/>
            <person name="Lucas S."/>
            <person name="Huang K."/>
            <person name="Goodstein D.M."/>
            <person name="Hawkins T."/>
            <person name="Plengvidhya V."/>
            <person name="Welker D."/>
            <person name="Hughes J."/>
            <person name="Goh Y."/>
            <person name="Benson A."/>
            <person name="Baldwin K."/>
            <person name="Lee J.-H."/>
            <person name="Diaz-Muniz I."/>
            <person name="Dosti B."/>
            <person name="Smeianov V."/>
            <person name="Wechter W."/>
            <person name="Barabote R."/>
            <person name="Lorca G."/>
            <person name="Altermann E."/>
            <person name="Barrangou R."/>
            <person name="Ganesan B."/>
            <person name="Xie Y."/>
            <person name="Rawsthorne H."/>
            <person name="Tamir D."/>
            <person name="Parker C."/>
            <person name="Breidt F."/>
            <person name="Broadbent J.R."/>
            <person name="Hutkins R."/>
            <person name="O'Sullivan D."/>
            <person name="Steele J."/>
            <person name="Unlu G."/>
            <person name="Saier M.H. Jr."/>
            <person name="Klaenhammer T."/>
            <person name="Richardson P."/>
            <person name="Kozyavkin S."/>
            <person name="Weimer B.C."/>
            <person name="Mills D.A."/>
        </authorList>
    </citation>
    <scope>NUCLEOTIDE SEQUENCE [LARGE SCALE GENOMIC DNA]</scope>
    <source>
        <strain>ATCC 367 / BCRC 12310 / CIP 105137 / JCM 1170 / LMG 11437 / NCIMB 947 / NCTC 947</strain>
    </source>
</reference>
<sequence length="162" mass="18515">MDLEIYDKTQDGVPAEHVNLIQDVLQYAGKYLKLADNTEMSVTLMNNEDIHRINQQYRGVDRATDVISFAIEDDDEEAADFPLVMDDELAAEIPENIGDIFVSMDKVAEQADYLGHSYERELGFLVVHGFLHLNGYDHMEPEDEKVMFKLQADILDAYGLKR</sequence>
<organism>
    <name type="scientific">Levilactobacillus brevis (strain ATCC 367 / BCRC 12310 / CIP 105137 / JCM 1170 / LMG 11437 / NCIMB 947 / NCTC 947)</name>
    <name type="common">Lactobacillus brevis</name>
    <dbReference type="NCBI Taxonomy" id="387344"/>
    <lineage>
        <taxon>Bacteria</taxon>
        <taxon>Bacillati</taxon>
        <taxon>Bacillota</taxon>
        <taxon>Bacilli</taxon>
        <taxon>Lactobacillales</taxon>
        <taxon>Lactobacillaceae</taxon>
        <taxon>Levilactobacillus</taxon>
    </lineage>
</organism>
<name>YBEY_LEVBA</name>
<keyword id="KW-0963">Cytoplasm</keyword>
<keyword id="KW-0255">Endonuclease</keyword>
<keyword id="KW-0378">Hydrolase</keyword>
<keyword id="KW-0479">Metal-binding</keyword>
<keyword id="KW-0540">Nuclease</keyword>
<keyword id="KW-1185">Reference proteome</keyword>
<keyword id="KW-0690">Ribosome biogenesis</keyword>
<keyword id="KW-0698">rRNA processing</keyword>
<keyword id="KW-0862">Zinc</keyword>
<protein>
    <recommendedName>
        <fullName evidence="1">Endoribonuclease YbeY</fullName>
        <ecNumber evidence="1">3.1.-.-</ecNumber>
    </recommendedName>
</protein>
<evidence type="ECO:0000255" key="1">
    <source>
        <dbReference type="HAMAP-Rule" id="MF_00009"/>
    </source>
</evidence>
<feature type="chain" id="PRO_0000284223" description="Endoribonuclease YbeY">
    <location>
        <begin position="1"/>
        <end position="162"/>
    </location>
</feature>
<feature type="binding site" evidence="1">
    <location>
        <position position="128"/>
    </location>
    <ligand>
        <name>Zn(2+)</name>
        <dbReference type="ChEBI" id="CHEBI:29105"/>
        <note>catalytic</note>
    </ligand>
</feature>
<feature type="binding site" evidence="1">
    <location>
        <position position="132"/>
    </location>
    <ligand>
        <name>Zn(2+)</name>
        <dbReference type="ChEBI" id="CHEBI:29105"/>
        <note>catalytic</note>
    </ligand>
</feature>
<feature type="binding site" evidence="1">
    <location>
        <position position="138"/>
    </location>
    <ligand>
        <name>Zn(2+)</name>
        <dbReference type="ChEBI" id="CHEBI:29105"/>
        <note>catalytic</note>
    </ligand>
</feature>
<comment type="function">
    <text evidence="1">Single strand-specific metallo-endoribonuclease involved in late-stage 70S ribosome quality control and in maturation of the 3' terminus of the 16S rRNA.</text>
</comment>
<comment type="cofactor">
    <cofactor evidence="1">
        <name>Zn(2+)</name>
        <dbReference type="ChEBI" id="CHEBI:29105"/>
    </cofactor>
    <text evidence="1">Binds 1 zinc ion.</text>
</comment>
<comment type="subcellular location">
    <subcellularLocation>
        <location evidence="1">Cytoplasm</location>
    </subcellularLocation>
</comment>
<comment type="similarity">
    <text evidence="1">Belongs to the endoribonuclease YbeY family.</text>
</comment>